<accession>P60483</accession>
<accession>O00633</accession>
<accession>O02679</accession>
<comment type="function">
    <text evidence="2 3 4">Dual-specificity protein phosphatase, dephosphorylating tyrosine-, serine- and threonine-phosphorylated proteins. Also functions as a lipid phosphatase, removing the phosphate in the D3 position of the inositol ring of PtdIns(3,4,5)P3/phosphatidylinositol 3,4,5-trisphosphate, PtdIns(3,4)P2/phosphatidylinositol 3,4-diphosphate and PtdIns3P/phosphatidylinositol 3-phosphate with a preference for PtdIns(3,4,5)P3. Furthermore, this enzyme can also act as a cytosolic inositol 3-phosphatase acting on Ins(1,3,4,5,6)P5/inositol 1,3,4,5,6 pentakisphosphate and possibly Ins(1,3,4,5)P4/1D-myo-inositol 1,3,4,5-tetrakisphosphate (By similarity). Antagonizes the PI3K-AKT/PKB signaling pathway by dephosphorylating phosphoinositides and thereby modulating cell cycle progression and cell survival (By similarity). The unphosphorylated form cooperates with MAGI2 to suppress AKT1 activation. In motile cells, suppresses the formation of lateral pseudopods and thereby promotes cell polarization and directed movement. Dephosphorylates tyrosine-phosphorylated focal adhesion kinase and inhibits cell migration and integrin-mediated cell spreading and focal adhesion formation (By similarity). Required for growth factor-induced epithelial cell migration; growth factor stimulation induces PTEN phosphorylation which changes its binding preference from the p85 regulatory subunit of the PI3K kinase complex to DLC1 and results in translocation of the PTEN-DLC1 complex to the posterior of migrating cells to promote RHOA activation (By similarity). Meanwhile, TNS3 switches binding preference from DLC1 to p85 and the TNS3-p85 complex translocates to the leading edge of migrating cells to activate RAC1 activation (By similarity). Plays a role as a key modulator of the AKT-mTOR signaling pathway controlling the tempo of the process of newborn neurons integration during adult neurogenesis, including correct neuron positioning, dendritic development and synapse formation (By similarity). Involved in the regulation of synaptic function in excitatory hippocampal synapses. Recruited to the postsynaptic membrane upon NMDA receptor activation, is required for the modulation of synaptic activity during plasticity. Enhancement of lipid phosphatase activity is able to drive depression of AMPA receptor-mediated synaptic responses, activity required for NMDA receptor-dependent long-term depression (LTD) (By similarity). May be a negative regulator of insulin signaling and glucose metabolism in adipose tissue. The nuclear monoubiquitinated form possesses greater apoptotic potential, whereas the cytoplasmic nonubiquitinated form induces less tumor suppressive ability (By similarity).</text>
</comment>
<comment type="catalytic activity">
    <reaction evidence="4">
        <text>a 1,2-diacyl-sn-glycero-3-phospho-(1D-myo-inositol-3,4,5-trisphosphate) + H2O = a 1,2-diacyl-sn-glycero-3-phospho-(1D-myo-inositol-4,5-bisphosphate) + phosphate</text>
        <dbReference type="Rhea" id="RHEA:25017"/>
        <dbReference type="ChEBI" id="CHEBI:15377"/>
        <dbReference type="ChEBI" id="CHEBI:43474"/>
        <dbReference type="ChEBI" id="CHEBI:57836"/>
        <dbReference type="ChEBI" id="CHEBI:58456"/>
        <dbReference type="EC" id="3.1.3.67"/>
    </reaction>
    <physiologicalReaction direction="left-to-right" evidence="4">
        <dbReference type="Rhea" id="RHEA:25018"/>
    </physiologicalReaction>
</comment>
<comment type="catalytic activity">
    <reaction evidence="4">
        <text>O-phospho-L-seryl-[protein] + H2O = L-seryl-[protein] + phosphate</text>
        <dbReference type="Rhea" id="RHEA:20629"/>
        <dbReference type="Rhea" id="RHEA-COMP:9863"/>
        <dbReference type="Rhea" id="RHEA-COMP:11604"/>
        <dbReference type="ChEBI" id="CHEBI:15377"/>
        <dbReference type="ChEBI" id="CHEBI:29999"/>
        <dbReference type="ChEBI" id="CHEBI:43474"/>
        <dbReference type="ChEBI" id="CHEBI:83421"/>
        <dbReference type="EC" id="3.1.3.16"/>
    </reaction>
    <physiologicalReaction direction="left-to-right" evidence="4">
        <dbReference type="Rhea" id="RHEA:20630"/>
    </physiologicalReaction>
</comment>
<comment type="catalytic activity">
    <reaction evidence="4">
        <text>O-phospho-L-threonyl-[protein] + H2O = L-threonyl-[protein] + phosphate</text>
        <dbReference type="Rhea" id="RHEA:47004"/>
        <dbReference type="Rhea" id="RHEA-COMP:11060"/>
        <dbReference type="Rhea" id="RHEA-COMP:11605"/>
        <dbReference type="ChEBI" id="CHEBI:15377"/>
        <dbReference type="ChEBI" id="CHEBI:30013"/>
        <dbReference type="ChEBI" id="CHEBI:43474"/>
        <dbReference type="ChEBI" id="CHEBI:61977"/>
        <dbReference type="EC" id="3.1.3.16"/>
    </reaction>
    <physiologicalReaction direction="left-to-right" evidence="4">
        <dbReference type="Rhea" id="RHEA:47005"/>
    </physiologicalReaction>
</comment>
<comment type="catalytic activity">
    <reaction evidence="4">
        <text>O-phospho-L-tyrosyl-[protein] + H2O = L-tyrosyl-[protein] + phosphate</text>
        <dbReference type="Rhea" id="RHEA:10684"/>
        <dbReference type="Rhea" id="RHEA-COMP:10136"/>
        <dbReference type="Rhea" id="RHEA-COMP:20101"/>
        <dbReference type="ChEBI" id="CHEBI:15377"/>
        <dbReference type="ChEBI" id="CHEBI:43474"/>
        <dbReference type="ChEBI" id="CHEBI:46858"/>
        <dbReference type="ChEBI" id="CHEBI:61978"/>
        <dbReference type="EC" id="3.1.3.48"/>
    </reaction>
    <physiologicalReaction direction="left-to-right" evidence="4">
        <dbReference type="Rhea" id="RHEA:10685"/>
    </physiologicalReaction>
</comment>
<comment type="catalytic activity">
    <reaction evidence="4">
        <text>1,2-dioctanoyl-sn-glycero-3-phospho-(1D-myo-inositol-3,4,5-trisphosphate) + H2O = 1,2-dioctanoyl-sn-glycero-3-phospho-(1D-myo-inositol-4,5-bisphosphate) + phosphate</text>
        <dbReference type="Rhea" id="RHEA:43552"/>
        <dbReference type="ChEBI" id="CHEBI:15377"/>
        <dbReference type="ChEBI" id="CHEBI:43474"/>
        <dbReference type="ChEBI" id="CHEBI:83416"/>
        <dbReference type="ChEBI" id="CHEBI:83419"/>
    </reaction>
    <physiologicalReaction direction="left-to-right" evidence="4">
        <dbReference type="Rhea" id="RHEA:43553"/>
    </physiologicalReaction>
</comment>
<comment type="catalytic activity">
    <reaction evidence="4">
        <text>1,2-dihexadecanoyl-sn-glycero-3-phospho-(1D-myo-inositol-3,4,5-trisphosphate) + H2O = 1,2-dihexadecanoyl-sn-glycero-3-phospho-(1D-myo-inositol-4,5-bisphosphate) + phosphate</text>
        <dbReference type="Rhea" id="RHEA:43560"/>
        <dbReference type="ChEBI" id="CHEBI:15377"/>
        <dbReference type="ChEBI" id="CHEBI:43474"/>
        <dbReference type="ChEBI" id="CHEBI:83420"/>
        <dbReference type="ChEBI" id="CHEBI:83423"/>
    </reaction>
    <physiologicalReaction direction="left-to-right" evidence="4">
        <dbReference type="Rhea" id="RHEA:43561"/>
    </physiologicalReaction>
</comment>
<comment type="catalytic activity">
    <reaction evidence="4">
        <text>1D-myo-inositol 1,3,4,5,6-pentakisphosphate + H2O = 1D-myo-inositol 1,4,5,6-tetrakisphosphate + phosphate</text>
        <dbReference type="Rhea" id="RHEA:77143"/>
        <dbReference type="ChEBI" id="CHEBI:15377"/>
        <dbReference type="ChEBI" id="CHEBI:43474"/>
        <dbReference type="ChEBI" id="CHEBI:57627"/>
        <dbReference type="ChEBI" id="CHEBI:57733"/>
    </reaction>
    <physiologicalReaction direction="left-to-right" evidence="4">
        <dbReference type="Rhea" id="RHEA:77144"/>
    </physiologicalReaction>
</comment>
<comment type="catalytic activity">
    <reaction evidence="4">
        <text>1D-myo-inositol 1,3,4,5-tetrakisphosphate + H2O = 1D-myo-inositol 1,4,5-trisphosphate + phosphate</text>
        <dbReference type="Rhea" id="RHEA:77155"/>
        <dbReference type="ChEBI" id="CHEBI:15377"/>
        <dbReference type="ChEBI" id="CHEBI:43474"/>
        <dbReference type="ChEBI" id="CHEBI:57895"/>
        <dbReference type="ChEBI" id="CHEBI:203600"/>
    </reaction>
    <physiologicalReaction direction="left-to-right" evidence="4">
        <dbReference type="Rhea" id="RHEA:77156"/>
    </physiologicalReaction>
</comment>
<comment type="cofactor">
    <cofactor evidence="1">
        <name>Mg(2+)</name>
        <dbReference type="ChEBI" id="CHEBI:18420"/>
    </cofactor>
</comment>
<comment type="subunit">
    <text evidence="2 3 4">Monomer. The unphosphorylated form interacts with the second PDZ domain of MAGI2 (By similarity). Interacts with MAGI2, MAGI3, MAST1 and MAST3, but neither with MAST4 nor with DLG5; interaction with MAGI2 increases protein stability (By similarity). Interacts with NEDD4 (By similarity). Interacts with NDFIP1 and NDFIP2; in the presence of NEDD4 or ITCH, this interaction promotes PTEN ubiquitination (By similarity). Interacts (via C2 domain) with FRK (By similarity). Interacts with USP7; the interaction is direct (By similarity). Interacts with ROCK1. Interacts with XIAP/BIRC4 (By similarity). Interacts with STK11; the interaction phosphorylates PTEN (By similarity). Interacts with PPP1R16B (By similarity). Interacts with NOP53; regulates PTEN phosphorylation and increases its stability (By similarity). Interacts (via PDZ domain-binding motif) with DLG4; the interaction is induced by NMDA and is required for PTEN location at postsynaptic density (By similarity). Interacts with the regulatory p85 subunit of the PI3K kinase complex and with Rho GTPase-activating protein DLC1; in resting cells, interacts (via C2 tensin-type domain) with p85 but, following growth factor stimulation, PTEN is phosphorylated which leads to weakened interaction with p85 and enhanced interaction (via C2 tensin-type domain) with DLC1 while p85 interaction with TNS3 increases (By similarity).</text>
</comment>
<comment type="subcellular location">
    <subcellularLocation>
        <location evidence="2">Cytoplasm</location>
    </subcellularLocation>
    <subcellularLocation>
        <location evidence="2">Nucleus</location>
    </subcellularLocation>
    <subcellularLocation>
        <location evidence="4">Nucleus</location>
        <location evidence="4">PML body</location>
    </subcellularLocation>
    <subcellularLocation>
        <location evidence="2">Cell projection</location>
        <location evidence="2">Dendritic spine</location>
    </subcellularLocation>
    <subcellularLocation>
        <location evidence="3">Postsynaptic density</location>
    </subcellularLocation>
    <text evidence="2 3 4">Monoubiquitinated form is nuclear (By similarity). Nonubiquitinated form is cytoplasmic (By similarity). Colocalized with PML and USP7 in PML nuclear bodies (By similarity). XIAP/BIRC4 promotes its nuclear localization (By similarity). Associares with the postsynaptic density in response to NMDAR activation (By similarity).</text>
</comment>
<comment type="PTM">
    <text evidence="2 4">Constitutively phosphorylated by CK2 under normal conditions. Phosphorylation results in an inhibited activity towards PIP3. Phosphorylation can both inhibit or promote PDZ-binding. Phosphorylation at Tyr-336 by FRK/PTK5 protects this protein from ubiquitin-mediated degradation probably by inhibiting its binding to NEDD4 (By similarity). Phosphorylation by PLK3 promotes its stability and prevents its degradation by the proteasome. Phosphorylation by ROCK1 is essential for its stability and activity (By similarity). Phosphorylated on Thr-319 and Thr-321 in the C2-type tensin domain following EGF stimulation which changes its binding preference from the p85 regulatory subunit of the PI3K kinase complex to DLC1 (By similarity).</text>
</comment>
<comment type="PTM">
    <text evidence="1 2">Monoubiquitinated; monoubiquitination is increased in presence of retinoic acid. Deubiquitinated by USP7; leading to its nuclear exclusion. Monoubiquitination of one of either Lys-13 and Lys-289 amino acid is sufficient to modulate PTEN compartmentalization (By similarity). Ubiquitinated by XIAP/BIRC4 (By similarity).</text>
</comment>
<comment type="PTM">
    <text evidence="4">Ubiquitinated by the DCX(DCAF13) E3 ubiquitin ligase complex, leading to its degradation.</text>
</comment>
<comment type="PTM">
    <text evidence="4">ISGylated. ISGylation promotes PTEN degradation.</text>
</comment>
<comment type="similarity">
    <text evidence="8">Belongs to the PTEN phosphatase protein family.</text>
</comment>
<gene>
    <name type="primary">PTEN</name>
    <name type="synonym">MMAC1</name>
</gene>
<reference key="1">
    <citation type="journal article" date="1997" name="Nat. Genet.">
        <title>Identification of a candidate tumour suppressor gene, MMAC1, at chromosome 10q23.3 that is mutated in multiple advanced cancers.</title>
        <authorList>
            <person name="Steck P.A."/>
            <person name="Pershouse M.A."/>
            <person name="Jasser S.A."/>
            <person name="Lin H."/>
            <person name="Yung W.K.A."/>
            <person name="Ligon A.H."/>
            <person name="Langford L.A."/>
            <person name="Baumgard M.L."/>
            <person name="Hattier T."/>
            <person name="Davis T."/>
            <person name="Frye C."/>
            <person name="Hu R."/>
            <person name="Swedlund B."/>
            <person name="Teng D.H.-F."/>
            <person name="Tavtigian S.V."/>
        </authorList>
    </citation>
    <scope>NUCLEOTIDE SEQUENCE [MRNA]</scope>
</reference>
<sequence length="403" mass="47166">MTAIIKEIVSRNKRRYQEDGFDLDLTYIYPNIIAMGFPAERLEGVYRNNIDDVVRFLDSKHKNHYKIYNLCAERHYDTAKFNCRVAQYPFEDHNPPQLELIKPFCEDLDQWLSEDDNHVAAIHCKAGKGRTGVMICAYLLHRGKFLKAQEALDFYGEVRTRDKKGVTIPSQRRYVYYYSYLLKNHLDYRPVALLFHKMMFETIPMFSGGTCNPQFVVCQLKVKIYSSNSGPTRREDKFMYFEFPQPLPVCGDIKVEFFHKQNKMLKKDKMFHFWVNTFFIPGPEETSEKVENGSLCDQEIDSICSIERADNDKEYLVLTLTKNDLDKANKDKANRYFSPNFKVKLYFTKTVEEPSNPEASSSTSVTPDVSDNEPDHYRYSDTTDSDPENEPFDEDQHTQITKV</sequence>
<proteinExistence type="evidence at transcript level"/>
<feature type="initiator methionine" description="Removed" evidence="4">
    <location>
        <position position="1"/>
    </location>
</feature>
<feature type="chain" id="PRO_0000215903" description="Phosphatidylinositol 3,4,5-trisphosphate 3-phosphatase and dual-specificity protein phosphatase PTEN">
    <location>
        <begin position="2"/>
        <end position="403"/>
    </location>
</feature>
<feature type="domain" description="Phosphatase tensin-type" evidence="6">
    <location>
        <begin position="14"/>
        <end position="185"/>
    </location>
</feature>
<feature type="domain" description="C2 tensin-type" evidence="5">
    <location>
        <begin position="190"/>
        <end position="350"/>
    </location>
</feature>
<feature type="region of interest" description="Required for interaction with NOP53" evidence="4">
    <location>
        <begin position="338"/>
        <end position="348"/>
    </location>
</feature>
<feature type="region of interest" description="Disordered" evidence="7">
    <location>
        <begin position="352"/>
        <end position="403"/>
    </location>
</feature>
<feature type="short sequence motif" description="PDZ domain-binding" evidence="2">
    <location>
        <begin position="401"/>
        <end position="403"/>
    </location>
</feature>
<feature type="compositionally biased region" description="Low complexity" evidence="7">
    <location>
        <begin position="360"/>
        <end position="369"/>
    </location>
</feature>
<feature type="compositionally biased region" description="Acidic residues" evidence="7">
    <location>
        <begin position="383"/>
        <end position="393"/>
    </location>
</feature>
<feature type="active site" description="Phosphocysteine intermediate" evidence="6">
    <location>
        <position position="124"/>
    </location>
</feature>
<feature type="modified residue" description="N-acetylthreonine" evidence="4">
    <location>
        <position position="2"/>
    </location>
</feature>
<feature type="modified residue" description="Phosphoserine" evidence="2">
    <location>
        <position position="294"/>
    </location>
</feature>
<feature type="modified residue" description="Phosphothreonine" evidence="4">
    <location>
        <position position="319"/>
    </location>
</feature>
<feature type="modified residue" description="Phosphothreonine" evidence="4">
    <location>
        <position position="321"/>
    </location>
</feature>
<feature type="modified residue" description="Phosphotyrosine; by FRK" evidence="4">
    <location>
        <position position="336"/>
    </location>
</feature>
<feature type="modified residue" description="Phosphothreonine; by GSK3-beta and PLK3" evidence="4">
    <location>
        <position position="366"/>
    </location>
</feature>
<feature type="modified residue" description="Phosphoserine; by CK2 and PLK3" evidence="4">
    <location>
        <position position="370"/>
    </location>
</feature>
<feature type="modified residue" description="Phosphoserine; by ROCK1" evidence="4">
    <location>
        <position position="380"/>
    </location>
</feature>
<feature type="modified residue" description="Phosphothreonine; by ROCK1" evidence="4">
    <location>
        <position position="382"/>
    </location>
</feature>
<feature type="modified residue" description="Phosphothreonine; by ROCK1" evidence="4">
    <location>
        <position position="383"/>
    </location>
</feature>
<feature type="modified residue" description="Phosphoserine; by CK2" evidence="4">
    <location>
        <position position="385"/>
    </location>
</feature>
<feature type="modified residue" description="Phosphothreonine" evidence="4">
    <location>
        <position position="401"/>
    </location>
</feature>
<feature type="cross-link" description="Glycyl lysine isopeptide (Lys-Gly) (interchain with G-Cter in ubiquitin)" evidence="4">
    <location>
        <position position="13"/>
    </location>
</feature>
<feature type="cross-link" description="Glycyl lysine isopeptide (Lys-Gly) (interchain with G-Cter in ubiquitin)" evidence="4">
    <location>
        <position position="289"/>
    </location>
</feature>
<name>PTEN_CANLF</name>
<dbReference type="EC" id="3.1.3.16" evidence="4"/>
<dbReference type="EC" id="3.1.3.48" evidence="4"/>
<dbReference type="EC" id="3.1.3.67" evidence="4"/>
<dbReference type="EC" id="3.1.3.-" evidence="4"/>
<dbReference type="EMBL" id="U92435">
    <property type="protein sequence ID" value="AAC48709.1"/>
    <property type="molecule type" value="mRNA"/>
</dbReference>
<dbReference type="RefSeq" id="NP_001003192.1">
    <property type="nucleotide sequence ID" value="NM_001003192.1"/>
</dbReference>
<dbReference type="SMR" id="P60483"/>
<dbReference type="FunCoup" id="P60483">
    <property type="interactions" value="2027"/>
</dbReference>
<dbReference type="STRING" id="9615.ENSCAFP00000045099"/>
<dbReference type="PaxDb" id="9612-ENSCAFP00000023027"/>
<dbReference type="Ensembl" id="ENSCAFT00030039048.1">
    <property type="protein sequence ID" value="ENSCAFP00030034056.1"/>
    <property type="gene ID" value="ENSCAFG00030021263.1"/>
</dbReference>
<dbReference type="Ensembl" id="ENSCAFT00040044339.1">
    <property type="protein sequence ID" value="ENSCAFP00040038712.1"/>
    <property type="gene ID" value="ENSCAFG00040023806.1"/>
</dbReference>
<dbReference type="Ensembl" id="ENSCAFT00845052143.1">
    <property type="protein sequence ID" value="ENSCAFP00845040898.1"/>
    <property type="gene ID" value="ENSCAFG00845029443.1"/>
</dbReference>
<dbReference type="GeneID" id="403832"/>
<dbReference type="KEGG" id="cfa:403832"/>
<dbReference type="CTD" id="5728"/>
<dbReference type="VEuPathDB" id="HostDB:ENSCAFG00845029443"/>
<dbReference type="eggNOG" id="KOG2283">
    <property type="taxonomic scope" value="Eukaryota"/>
</dbReference>
<dbReference type="GeneTree" id="ENSGT00940000154335"/>
<dbReference type="InParanoid" id="P60483"/>
<dbReference type="OrthoDB" id="16692at2759"/>
<dbReference type="Reactome" id="R-CFA-1660499">
    <property type="pathway name" value="Synthesis of PIPs at the plasma membrane"/>
</dbReference>
<dbReference type="Reactome" id="R-CFA-1855204">
    <property type="pathway name" value="Synthesis of IP3 and IP4 in the cytosol"/>
</dbReference>
<dbReference type="Reactome" id="R-CFA-199418">
    <property type="pathway name" value="Negative regulation of the PI3K/AKT network"/>
</dbReference>
<dbReference type="Reactome" id="R-CFA-202424">
    <property type="pathway name" value="Downstream TCR signaling"/>
</dbReference>
<dbReference type="Reactome" id="R-CFA-5689880">
    <property type="pathway name" value="Ub-specific processing proteases"/>
</dbReference>
<dbReference type="Reactome" id="R-CFA-5689896">
    <property type="pathway name" value="Ovarian tumor domain proteases"/>
</dbReference>
<dbReference type="Reactome" id="R-CFA-8948747">
    <property type="pathway name" value="Regulation of PTEN localization"/>
</dbReference>
<dbReference type="Reactome" id="R-CFA-8948751">
    <property type="pathway name" value="Regulation of PTEN stability and activity"/>
</dbReference>
<dbReference type="Proteomes" id="UP000002254">
    <property type="component" value="Unplaced"/>
</dbReference>
<dbReference type="Proteomes" id="UP000694429">
    <property type="component" value="Chromosome 26"/>
</dbReference>
<dbReference type="Proteomes" id="UP000694542">
    <property type="component" value="Chromosome 26"/>
</dbReference>
<dbReference type="Proteomes" id="UP000805418">
    <property type="component" value="Chromosome 26"/>
</dbReference>
<dbReference type="GO" id="GO:0016324">
    <property type="term" value="C:apical plasma membrane"/>
    <property type="evidence" value="ECO:0007669"/>
    <property type="project" value="Ensembl"/>
</dbReference>
<dbReference type="GO" id="GO:0042995">
    <property type="term" value="C:cell projection"/>
    <property type="evidence" value="ECO:0000318"/>
    <property type="project" value="GO_Central"/>
</dbReference>
<dbReference type="GO" id="GO:0005737">
    <property type="term" value="C:cytoplasm"/>
    <property type="evidence" value="ECO:0000250"/>
    <property type="project" value="UniProtKB"/>
</dbReference>
<dbReference type="GO" id="GO:0009898">
    <property type="term" value="C:cytoplasmic side of plasma membrane"/>
    <property type="evidence" value="ECO:0007669"/>
    <property type="project" value="Ensembl"/>
</dbReference>
<dbReference type="GO" id="GO:0005829">
    <property type="term" value="C:cytosol"/>
    <property type="evidence" value="ECO:0000318"/>
    <property type="project" value="GO_Central"/>
</dbReference>
<dbReference type="GO" id="GO:0043197">
    <property type="term" value="C:dendritic spine"/>
    <property type="evidence" value="ECO:0007669"/>
    <property type="project" value="UniProtKB-SubCell"/>
</dbReference>
<dbReference type="GO" id="GO:0005634">
    <property type="term" value="C:nucleus"/>
    <property type="evidence" value="ECO:0000318"/>
    <property type="project" value="GO_Central"/>
</dbReference>
<dbReference type="GO" id="GO:0005886">
    <property type="term" value="C:plasma membrane"/>
    <property type="evidence" value="ECO:0000318"/>
    <property type="project" value="GO_Central"/>
</dbReference>
<dbReference type="GO" id="GO:0016605">
    <property type="term" value="C:PML body"/>
    <property type="evidence" value="ECO:0007669"/>
    <property type="project" value="UniProtKB-SubCell"/>
</dbReference>
<dbReference type="GO" id="GO:0014069">
    <property type="term" value="C:postsynaptic density"/>
    <property type="evidence" value="ECO:0007669"/>
    <property type="project" value="UniProtKB-SubCell"/>
</dbReference>
<dbReference type="GO" id="GO:0010997">
    <property type="term" value="F:anaphase-promoting complex binding"/>
    <property type="evidence" value="ECO:0007669"/>
    <property type="project" value="Ensembl"/>
</dbReference>
<dbReference type="GO" id="GO:0008013">
    <property type="term" value="F:beta-catenin binding"/>
    <property type="evidence" value="ECO:0007669"/>
    <property type="project" value="Ensembl"/>
</dbReference>
<dbReference type="GO" id="GO:0042802">
    <property type="term" value="F:identical protein binding"/>
    <property type="evidence" value="ECO:0007669"/>
    <property type="project" value="Ensembl"/>
</dbReference>
<dbReference type="GO" id="GO:0030351">
    <property type="term" value="F:inositol-1,3,4,5,6-pentakisphosphate 3-phosphatase activity"/>
    <property type="evidence" value="ECO:0000250"/>
    <property type="project" value="UniProtKB"/>
</dbReference>
<dbReference type="GO" id="GO:0051717">
    <property type="term" value="F:inositol-1,3,4,5-tetrakisphosphate 3-phosphatase activity"/>
    <property type="evidence" value="ECO:0000250"/>
    <property type="project" value="UniProtKB"/>
</dbReference>
<dbReference type="GO" id="GO:0030165">
    <property type="term" value="F:PDZ domain binding"/>
    <property type="evidence" value="ECO:0000250"/>
    <property type="project" value="UniProtKB"/>
</dbReference>
<dbReference type="GO" id="GO:0016314">
    <property type="term" value="F:phosphatidylinositol-3,4,5-trisphosphate 3-phosphatase activity"/>
    <property type="evidence" value="ECO:0000250"/>
    <property type="project" value="UniProtKB"/>
</dbReference>
<dbReference type="GO" id="GO:0051800">
    <property type="term" value="F:phosphatidylinositol-3,4-bisphosphate 3-phosphatase activity"/>
    <property type="evidence" value="ECO:0000250"/>
    <property type="project" value="UniProtKB"/>
</dbReference>
<dbReference type="GO" id="GO:0004438">
    <property type="term" value="F:phosphatidylinositol-3-phosphate phosphatase activity"/>
    <property type="evidence" value="ECO:0000250"/>
    <property type="project" value="UniProtKB"/>
</dbReference>
<dbReference type="GO" id="GO:0004722">
    <property type="term" value="F:protein serine/threonine phosphatase activity"/>
    <property type="evidence" value="ECO:0000250"/>
    <property type="project" value="UniProtKB"/>
</dbReference>
<dbReference type="GO" id="GO:0004725">
    <property type="term" value="F:protein tyrosine phosphatase activity"/>
    <property type="evidence" value="ECO:0000250"/>
    <property type="project" value="UniProtKB"/>
</dbReference>
<dbReference type="GO" id="GO:1990381">
    <property type="term" value="F:ubiquitin-specific protease binding"/>
    <property type="evidence" value="ECO:0007669"/>
    <property type="project" value="Ensembl"/>
</dbReference>
<dbReference type="GO" id="GO:0006915">
    <property type="term" value="P:apoptotic process"/>
    <property type="evidence" value="ECO:0007669"/>
    <property type="project" value="UniProtKB-KW"/>
</dbReference>
<dbReference type="GO" id="GO:0016477">
    <property type="term" value="P:cell migration"/>
    <property type="evidence" value="ECO:0000250"/>
    <property type="project" value="UniProtKB"/>
</dbReference>
<dbReference type="GO" id="GO:0048870">
    <property type="term" value="P:cell motility"/>
    <property type="evidence" value="ECO:0000318"/>
    <property type="project" value="GO_Central"/>
</dbReference>
<dbReference type="GO" id="GO:0071257">
    <property type="term" value="P:cellular response to electrical stimulus"/>
    <property type="evidence" value="ECO:0007669"/>
    <property type="project" value="Ensembl"/>
</dbReference>
<dbReference type="GO" id="GO:0007417">
    <property type="term" value="P:central nervous system development"/>
    <property type="evidence" value="ECO:0000250"/>
    <property type="project" value="UniProtKB"/>
</dbReference>
<dbReference type="GO" id="GO:0007507">
    <property type="term" value="P:heart development"/>
    <property type="evidence" value="ECO:0000250"/>
    <property type="project" value="UniProtKB"/>
</dbReference>
<dbReference type="GO" id="GO:0030336">
    <property type="term" value="P:negative regulation of cell migration"/>
    <property type="evidence" value="ECO:0000250"/>
    <property type="project" value="UniProtKB"/>
</dbReference>
<dbReference type="GO" id="GO:0008285">
    <property type="term" value="P:negative regulation of cell population proliferation"/>
    <property type="evidence" value="ECO:0000250"/>
    <property type="project" value="UniProtKB"/>
</dbReference>
<dbReference type="GO" id="GO:0010719">
    <property type="term" value="P:negative regulation of epithelial to mesenchymal transition"/>
    <property type="evidence" value="ECO:0007669"/>
    <property type="project" value="Ensembl"/>
</dbReference>
<dbReference type="GO" id="GO:0051895">
    <property type="term" value="P:negative regulation of focal adhesion assembly"/>
    <property type="evidence" value="ECO:0000250"/>
    <property type="project" value="UniProtKB"/>
</dbReference>
<dbReference type="GO" id="GO:2000134">
    <property type="term" value="P:negative regulation of G1/S transition of mitotic cell cycle"/>
    <property type="evidence" value="ECO:0007669"/>
    <property type="project" value="Ensembl"/>
</dbReference>
<dbReference type="GO" id="GO:0051548">
    <property type="term" value="P:negative regulation of keratinocyte migration"/>
    <property type="evidence" value="ECO:0007669"/>
    <property type="project" value="Ensembl"/>
</dbReference>
<dbReference type="GO" id="GO:0045668">
    <property type="term" value="P:negative regulation of osteoblast differentiation"/>
    <property type="evidence" value="ECO:0007669"/>
    <property type="project" value="Ensembl"/>
</dbReference>
<dbReference type="GO" id="GO:0051898">
    <property type="term" value="P:negative regulation of phosphatidylinositol 3-kinase/protein kinase B signal transduction"/>
    <property type="evidence" value="ECO:0000250"/>
    <property type="project" value="UniProtKB"/>
</dbReference>
<dbReference type="GO" id="GO:1904706">
    <property type="term" value="P:negative regulation of vascular associated smooth muscle cell proliferation"/>
    <property type="evidence" value="ECO:0007669"/>
    <property type="project" value="Ensembl"/>
</dbReference>
<dbReference type="GO" id="GO:1903690">
    <property type="term" value="P:negative regulation of wound healing, spreading of epidermal cells"/>
    <property type="evidence" value="ECO:0007669"/>
    <property type="project" value="Ensembl"/>
</dbReference>
<dbReference type="GO" id="GO:0043491">
    <property type="term" value="P:phosphatidylinositol 3-kinase/protein kinase B signal transduction"/>
    <property type="evidence" value="ECO:0000318"/>
    <property type="project" value="GO_Central"/>
</dbReference>
<dbReference type="GO" id="GO:0046856">
    <property type="term" value="P:phosphatidylinositol dephosphorylation"/>
    <property type="evidence" value="ECO:0000318"/>
    <property type="project" value="GO_Central"/>
</dbReference>
<dbReference type="GO" id="GO:1902533">
    <property type="term" value="P:positive regulation of intracellular signal transduction"/>
    <property type="evidence" value="ECO:0007669"/>
    <property type="project" value="Ensembl"/>
</dbReference>
<dbReference type="GO" id="GO:0045944">
    <property type="term" value="P:positive regulation of transcription by RNA polymerase II"/>
    <property type="evidence" value="ECO:0007669"/>
    <property type="project" value="Ensembl"/>
</dbReference>
<dbReference type="GO" id="GO:2000060">
    <property type="term" value="P:positive regulation of ubiquitin-dependent protein catabolic process"/>
    <property type="evidence" value="ECO:0007669"/>
    <property type="project" value="Ensembl"/>
</dbReference>
<dbReference type="GO" id="GO:0006470">
    <property type="term" value="P:protein dephosphorylation"/>
    <property type="evidence" value="ECO:0000250"/>
    <property type="project" value="UniProtKB"/>
</dbReference>
<dbReference type="GO" id="GO:0050821">
    <property type="term" value="P:protein stabilization"/>
    <property type="evidence" value="ECO:0007669"/>
    <property type="project" value="Ensembl"/>
</dbReference>
<dbReference type="GO" id="GO:0010975">
    <property type="term" value="P:regulation of neuron projection development"/>
    <property type="evidence" value="ECO:0000250"/>
    <property type="project" value="UniProtKB"/>
</dbReference>
<dbReference type="GO" id="GO:0051896">
    <property type="term" value="P:regulation of phosphatidylinositol 3-kinase/protein kinase B signal transduction"/>
    <property type="evidence" value="ECO:0000318"/>
    <property type="project" value="GO_Central"/>
</dbReference>
<dbReference type="GO" id="GO:0031647">
    <property type="term" value="P:regulation of protein stability"/>
    <property type="evidence" value="ECO:0000250"/>
    <property type="project" value="UniProtKB"/>
</dbReference>
<dbReference type="GO" id="GO:0007056">
    <property type="term" value="P:spindle assembly involved in female meiosis"/>
    <property type="evidence" value="ECO:0007669"/>
    <property type="project" value="Ensembl"/>
</dbReference>
<dbReference type="CDD" id="cd14509">
    <property type="entry name" value="PTP_PTEN"/>
    <property type="match status" value="1"/>
</dbReference>
<dbReference type="FunFam" id="2.60.40.1110:FF:000003">
    <property type="entry name" value="Phosphatidylinositol 3,4,5-trisphosphate 3-phosphatase and dual-specificity protein phosphatase PTEN"/>
    <property type="match status" value="1"/>
</dbReference>
<dbReference type="FunFam" id="3.90.190.10:FF:000029">
    <property type="entry name" value="Phosphatidylinositol 3,4,5-trisphosphate 3-phosphatase and dual-specificity protein phosphatase PTEN"/>
    <property type="match status" value="1"/>
</dbReference>
<dbReference type="Gene3D" id="2.60.40.1110">
    <property type="match status" value="1"/>
</dbReference>
<dbReference type="Gene3D" id="3.90.190.10">
    <property type="entry name" value="Protein tyrosine phosphatase superfamily"/>
    <property type="match status" value="1"/>
</dbReference>
<dbReference type="InterPro" id="IPR017361">
    <property type="entry name" value="Bifunc_PIno_P3_Pase/Pase_PTEN"/>
</dbReference>
<dbReference type="InterPro" id="IPR035892">
    <property type="entry name" value="C2_domain_sf"/>
</dbReference>
<dbReference type="InterPro" id="IPR051281">
    <property type="entry name" value="Dual-spec_lipid-protein_phosph"/>
</dbReference>
<dbReference type="InterPro" id="IPR029021">
    <property type="entry name" value="Prot-tyrosine_phosphatase-like"/>
</dbReference>
<dbReference type="InterPro" id="IPR045101">
    <property type="entry name" value="PTP_PTEN"/>
</dbReference>
<dbReference type="InterPro" id="IPR014020">
    <property type="entry name" value="Tensin_C2-dom"/>
</dbReference>
<dbReference type="InterPro" id="IPR029023">
    <property type="entry name" value="Tensin_phosphatase"/>
</dbReference>
<dbReference type="InterPro" id="IPR016130">
    <property type="entry name" value="Tyr_Pase_AS"/>
</dbReference>
<dbReference type="InterPro" id="IPR003595">
    <property type="entry name" value="Tyr_Pase_cat"/>
</dbReference>
<dbReference type="InterPro" id="IPR000387">
    <property type="entry name" value="Tyr_Pase_dom"/>
</dbReference>
<dbReference type="PANTHER" id="PTHR12305">
    <property type="entry name" value="PHOSPHATASE WITH HOMOLOGY TO TENSIN"/>
    <property type="match status" value="1"/>
</dbReference>
<dbReference type="PANTHER" id="PTHR12305:SF81">
    <property type="entry name" value="PHOSPHATIDYLINOSITOL 3,4,5-TRISPHOSPHATE 3-PHOSPHATASE AND DUAL-SPECIFICITY PROTEIN PHOSPHATASE PTEN"/>
    <property type="match status" value="1"/>
</dbReference>
<dbReference type="Pfam" id="PF10409">
    <property type="entry name" value="PTEN_C2"/>
    <property type="match status" value="1"/>
</dbReference>
<dbReference type="Pfam" id="PF22785">
    <property type="entry name" value="Tc-R-P"/>
    <property type="match status" value="1"/>
</dbReference>
<dbReference type="PIRSF" id="PIRSF038025">
    <property type="entry name" value="PTEN"/>
    <property type="match status" value="1"/>
</dbReference>
<dbReference type="SMART" id="SM01326">
    <property type="entry name" value="PTEN_C2"/>
    <property type="match status" value="1"/>
</dbReference>
<dbReference type="SMART" id="SM00404">
    <property type="entry name" value="PTPc_motif"/>
    <property type="match status" value="1"/>
</dbReference>
<dbReference type="SMART" id="SM01301">
    <property type="entry name" value="PTPlike_phytase"/>
    <property type="match status" value="1"/>
</dbReference>
<dbReference type="SUPFAM" id="SSF52799">
    <property type="entry name" value="(Phosphotyrosine protein) phosphatases II"/>
    <property type="match status" value="1"/>
</dbReference>
<dbReference type="SUPFAM" id="SSF49562">
    <property type="entry name" value="C2 domain (Calcium/lipid-binding domain, CaLB)"/>
    <property type="match status" value="1"/>
</dbReference>
<dbReference type="PROSITE" id="PS51182">
    <property type="entry name" value="C2_TENSIN"/>
    <property type="match status" value="1"/>
</dbReference>
<dbReference type="PROSITE" id="PS51181">
    <property type="entry name" value="PPASE_TENSIN"/>
    <property type="match status" value="1"/>
</dbReference>
<dbReference type="PROSITE" id="PS50056">
    <property type="entry name" value="TYR_PHOSPHATASE_2"/>
    <property type="match status" value="1"/>
</dbReference>
<evidence type="ECO:0000250" key="1"/>
<evidence type="ECO:0000250" key="2">
    <source>
        <dbReference type="UniProtKB" id="O08586"/>
    </source>
</evidence>
<evidence type="ECO:0000250" key="3">
    <source>
        <dbReference type="UniProtKB" id="O54857"/>
    </source>
</evidence>
<evidence type="ECO:0000250" key="4">
    <source>
        <dbReference type="UniProtKB" id="P60484"/>
    </source>
</evidence>
<evidence type="ECO:0000255" key="5">
    <source>
        <dbReference type="PROSITE-ProRule" id="PRU00589"/>
    </source>
</evidence>
<evidence type="ECO:0000255" key="6">
    <source>
        <dbReference type="PROSITE-ProRule" id="PRU00590"/>
    </source>
</evidence>
<evidence type="ECO:0000256" key="7">
    <source>
        <dbReference type="SAM" id="MobiDB-lite"/>
    </source>
</evidence>
<evidence type="ECO:0000305" key="8"/>
<organism>
    <name type="scientific">Canis lupus familiaris</name>
    <name type="common">Dog</name>
    <name type="synonym">Canis familiaris</name>
    <dbReference type="NCBI Taxonomy" id="9615"/>
    <lineage>
        <taxon>Eukaryota</taxon>
        <taxon>Metazoa</taxon>
        <taxon>Chordata</taxon>
        <taxon>Craniata</taxon>
        <taxon>Vertebrata</taxon>
        <taxon>Euteleostomi</taxon>
        <taxon>Mammalia</taxon>
        <taxon>Eutheria</taxon>
        <taxon>Laurasiatheria</taxon>
        <taxon>Carnivora</taxon>
        <taxon>Caniformia</taxon>
        <taxon>Canidae</taxon>
        <taxon>Canis</taxon>
    </lineage>
</organism>
<keyword id="KW-0007">Acetylation</keyword>
<keyword id="KW-0053">Apoptosis</keyword>
<keyword id="KW-0966">Cell projection</keyword>
<keyword id="KW-0963">Cytoplasm</keyword>
<keyword id="KW-0378">Hydrolase</keyword>
<keyword id="KW-1017">Isopeptide bond</keyword>
<keyword id="KW-0443">Lipid metabolism</keyword>
<keyword id="KW-0524">Neurogenesis</keyword>
<keyword id="KW-0539">Nucleus</keyword>
<keyword id="KW-0597">Phosphoprotein</keyword>
<keyword id="KW-0904">Protein phosphatase</keyword>
<keyword id="KW-1185">Reference proteome</keyword>
<keyword id="KW-0770">Synapse</keyword>
<keyword id="KW-0043">Tumor suppressor</keyword>
<keyword id="KW-0832">Ubl conjugation</keyword>
<protein>
    <recommendedName>
        <fullName evidence="4">Phosphatidylinositol 3,4,5-trisphosphate 3-phosphatase and dual-specificity protein phosphatase PTEN</fullName>
        <ecNumber evidence="4">3.1.3.16</ecNumber>
        <ecNumber evidence="4">3.1.3.48</ecNumber>
        <ecNumber evidence="4">3.1.3.67</ecNumber>
    </recommendedName>
    <alternativeName>
        <fullName evidence="4">Inositol polyphosphate 3-phosphatase</fullName>
        <ecNumber evidence="4">3.1.3.-</ecNumber>
    </alternativeName>
    <alternativeName>
        <fullName>Mutated in multiple advanced cancers 1</fullName>
    </alternativeName>
    <alternativeName>
        <fullName>Phosphatase and tensin homolog</fullName>
    </alternativeName>
</protein>